<proteinExistence type="evidence at transcript level"/>
<sequence>MATKIDKEACRTAYNLVRDDSSAVIWVTFKYDGSTIVPGEQGAEYQDFIQQCTDDVRLFAFVRFTTGDAMSKRSKFALITWIGENVSGLQRAKTGTDKTLVKEVVQNFAKEFVISDRKELEEDFIKNELKKAGGANYDAQTE</sequence>
<keyword id="KW-0007">Acetylation</keyword>
<keyword id="KW-0009">Actin-binding</keyword>
<keyword id="KW-0143">Chaperone</keyword>
<keyword id="KW-0963">Cytoplasm</keyword>
<keyword id="KW-0206">Cytoskeleton</keyword>
<keyword id="KW-0539">Nucleus</keyword>
<keyword id="KW-1185">Reference proteome</keyword>
<evidence type="ECO:0000250" key="1"/>
<evidence type="ECO:0000250" key="2">
    <source>
        <dbReference type="UniProtKB" id="Q14019"/>
    </source>
</evidence>
<evidence type="ECO:0000255" key="3">
    <source>
        <dbReference type="PROSITE-ProRule" id="PRU00599"/>
    </source>
</evidence>
<evidence type="ECO:0000305" key="4"/>
<comment type="function">
    <text evidence="1">Binds to F-actin in a calcium-independent manner. Has no direct effect on actin depolymerization. Acts as a chaperone for ALOX5 (5LO), influencing both its stability and activity in leukotrienes synthesis (By similarity).</text>
</comment>
<comment type="subunit">
    <text evidence="1">Interacts with 5-lipoxygenase (ALOX5/5LO) in a calcium-independent manner. Binds to F-actin with a stoichiometry of 1:2 (By similarity).</text>
</comment>
<comment type="subcellular location">
    <subcellularLocation>
        <location evidence="2">Cytoplasm</location>
    </subcellularLocation>
    <subcellularLocation>
        <location evidence="2">Cytoplasm</location>
        <location evidence="2">Cytoskeleton</location>
    </subcellularLocation>
    <subcellularLocation>
        <location evidence="2">Nucleus</location>
    </subcellularLocation>
</comment>
<comment type="similarity">
    <text evidence="4">Belongs to the actin-binding proteins ADF family. Coactosin subfamily.</text>
</comment>
<accession>Q2HJ57</accession>
<protein>
    <recommendedName>
        <fullName>Coactosin-like protein</fullName>
    </recommendedName>
</protein>
<gene>
    <name type="primary">COTL1</name>
</gene>
<name>COTL1_BOVIN</name>
<reference key="1">
    <citation type="submission" date="2006-02" db="EMBL/GenBank/DDBJ databases">
        <authorList>
            <consortium name="NIH - Mammalian Gene Collection (MGC) project"/>
        </authorList>
    </citation>
    <scope>NUCLEOTIDE SEQUENCE [LARGE SCALE MRNA]</scope>
    <source>
        <strain>Hereford</strain>
        <tissue>Uterus</tissue>
    </source>
</reference>
<organism>
    <name type="scientific">Bos taurus</name>
    <name type="common">Bovine</name>
    <dbReference type="NCBI Taxonomy" id="9913"/>
    <lineage>
        <taxon>Eukaryota</taxon>
        <taxon>Metazoa</taxon>
        <taxon>Chordata</taxon>
        <taxon>Craniata</taxon>
        <taxon>Vertebrata</taxon>
        <taxon>Euteleostomi</taxon>
        <taxon>Mammalia</taxon>
        <taxon>Eutheria</taxon>
        <taxon>Laurasiatheria</taxon>
        <taxon>Artiodactyla</taxon>
        <taxon>Ruminantia</taxon>
        <taxon>Pecora</taxon>
        <taxon>Bovidae</taxon>
        <taxon>Bovinae</taxon>
        <taxon>Bos</taxon>
    </lineage>
</organism>
<dbReference type="EMBL" id="BC113301">
    <property type="protein sequence ID" value="AAI13302.1"/>
    <property type="molecule type" value="mRNA"/>
</dbReference>
<dbReference type="RefSeq" id="NP_001040058.1">
    <property type="nucleotide sequence ID" value="NM_001046593.1"/>
</dbReference>
<dbReference type="RefSeq" id="XP_005218454.1">
    <property type="nucleotide sequence ID" value="XM_005218397.1"/>
</dbReference>
<dbReference type="BMRB" id="Q2HJ57"/>
<dbReference type="SMR" id="Q2HJ57"/>
<dbReference type="FunCoup" id="Q2HJ57">
    <property type="interactions" value="1302"/>
</dbReference>
<dbReference type="STRING" id="9913.ENSBTAP00000021704"/>
<dbReference type="PaxDb" id="9913-ENSBTAP00000021704"/>
<dbReference type="Ensembl" id="ENSBTAT00000021704.5">
    <property type="protein sequence ID" value="ENSBTAP00000021704.4"/>
    <property type="gene ID" value="ENSBTAG00000016315.6"/>
</dbReference>
<dbReference type="GeneID" id="617165"/>
<dbReference type="KEGG" id="bta:617165"/>
<dbReference type="CTD" id="23406"/>
<dbReference type="VEuPathDB" id="HostDB:ENSBTAG00000016315"/>
<dbReference type="VGNC" id="VGNC:27626">
    <property type="gene designation" value="COTL1"/>
</dbReference>
<dbReference type="eggNOG" id="KOG3655">
    <property type="taxonomic scope" value="Eukaryota"/>
</dbReference>
<dbReference type="GeneTree" id="ENSGT00390000012498"/>
<dbReference type="HOGENOM" id="CLU_129657_1_0_1"/>
<dbReference type="InParanoid" id="Q2HJ57"/>
<dbReference type="OMA" id="WIGPNCK"/>
<dbReference type="OrthoDB" id="20822at2759"/>
<dbReference type="TreeFam" id="TF324318"/>
<dbReference type="Reactome" id="R-BTA-6798695">
    <property type="pathway name" value="Neutrophil degranulation"/>
</dbReference>
<dbReference type="Proteomes" id="UP000009136">
    <property type="component" value="Chromosome 18"/>
</dbReference>
<dbReference type="Bgee" id="ENSBTAG00000016315">
    <property type="expression patterns" value="Expressed in leukocyte and 105 other cell types or tissues"/>
</dbReference>
<dbReference type="GO" id="GO:0030864">
    <property type="term" value="C:cortical actin cytoskeleton"/>
    <property type="evidence" value="ECO:0000318"/>
    <property type="project" value="GO_Central"/>
</dbReference>
<dbReference type="GO" id="GO:0005634">
    <property type="term" value="C:nucleus"/>
    <property type="evidence" value="ECO:0007669"/>
    <property type="project" value="UniProtKB-SubCell"/>
</dbReference>
<dbReference type="GO" id="GO:0030427">
    <property type="term" value="C:site of polarized growth"/>
    <property type="evidence" value="ECO:0000318"/>
    <property type="project" value="GO_Central"/>
</dbReference>
<dbReference type="GO" id="GO:0051015">
    <property type="term" value="F:actin filament binding"/>
    <property type="evidence" value="ECO:0000318"/>
    <property type="project" value="GO_Central"/>
</dbReference>
<dbReference type="GO" id="GO:0030833">
    <property type="term" value="P:regulation of actin filament polymerization"/>
    <property type="evidence" value="ECO:0000318"/>
    <property type="project" value="GO_Central"/>
</dbReference>
<dbReference type="CDD" id="cd11282">
    <property type="entry name" value="ADF_coactosin_like"/>
    <property type="match status" value="1"/>
</dbReference>
<dbReference type="FunFam" id="3.40.20.10:FF:000018">
    <property type="entry name" value="Coactosin-like 1"/>
    <property type="match status" value="1"/>
</dbReference>
<dbReference type="Gene3D" id="3.40.20.10">
    <property type="entry name" value="Severin"/>
    <property type="match status" value="1"/>
</dbReference>
<dbReference type="InterPro" id="IPR002108">
    <property type="entry name" value="ADF-H"/>
</dbReference>
<dbReference type="InterPro" id="IPR029006">
    <property type="entry name" value="ADF-H/Gelsolin-like_dom_sf"/>
</dbReference>
<dbReference type="PANTHER" id="PTHR10829:SF29">
    <property type="entry name" value="COACTOSIN-LIKE PROTEIN"/>
    <property type="match status" value="1"/>
</dbReference>
<dbReference type="PANTHER" id="PTHR10829">
    <property type="entry name" value="CORTACTIN AND DREBRIN"/>
    <property type="match status" value="1"/>
</dbReference>
<dbReference type="Pfam" id="PF00241">
    <property type="entry name" value="Cofilin_ADF"/>
    <property type="match status" value="1"/>
</dbReference>
<dbReference type="SMART" id="SM00102">
    <property type="entry name" value="ADF"/>
    <property type="match status" value="1"/>
</dbReference>
<dbReference type="SUPFAM" id="SSF55753">
    <property type="entry name" value="Actin depolymerizing proteins"/>
    <property type="match status" value="1"/>
</dbReference>
<dbReference type="PROSITE" id="PS51263">
    <property type="entry name" value="ADF_H"/>
    <property type="match status" value="1"/>
</dbReference>
<feature type="initiator methionine" description="Removed" evidence="2">
    <location>
        <position position="1"/>
    </location>
</feature>
<feature type="chain" id="PRO_0000244595" description="Coactosin-like protein">
    <location>
        <begin position="2"/>
        <end position="142"/>
    </location>
</feature>
<feature type="domain" description="ADF-H" evidence="3">
    <location>
        <begin position="2"/>
        <end position="130"/>
    </location>
</feature>
<feature type="region of interest" description="Flexible and important for F-actin binding" evidence="1">
    <location>
        <begin position="66"/>
        <end position="75"/>
    </location>
</feature>
<feature type="modified residue" description="N-acetylalanine" evidence="2">
    <location>
        <position position="2"/>
    </location>
</feature>
<feature type="modified residue" description="N6-acetyllysine" evidence="2">
    <location>
        <position position="102"/>
    </location>
</feature>
<feature type="modified residue" description="N6-acetyllysine" evidence="2">
    <location>
        <position position="126"/>
    </location>
</feature>